<proteinExistence type="inferred from homology"/>
<protein>
    <recommendedName>
        <fullName evidence="1">Isocitrate dehydrogenase kinase/phosphatase</fullName>
        <shortName evidence="1">IDH kinase/phosphatase</shortName>
        <shortName evidence="1">IDHK/P</shortName>
        <ecNumber evidence="1">2.7.11.5</ecNumber>
        <ecNumber evidence="1">3.1.3.-</ecNumber>
    </recommendedName>
</protein>
<reference key="1">
    <citation type="journal article" date="2003" name="Nat. Genet.">
        <title>Comparative analysis of the genome sequences of Bordetella pertussis, Bordetella parapertussis and Bordetella bronchiseptica.</title>
        <authorList>
            <person name="Parkhill J."/>
            <person name="Sebaihia M."/>
            <person name="Preston A."/>
            <person name="Murphy L.D."/>
            <person name="Thomson N.R."/>
            <person name="Harris D.E."/>
            <person name="Holden M.T.G."/>
            <person name="Churcher C.M."/>
            <person name="Bentley S.D."/>
            <person name="Mungall K.L."/>
            <person name="Cerdeno-Tarraga A.-M."/>
            <person name="Temple L."/>
            <person name="James K.D."/>
            <person name="Harris B."/>
            <person name="Quail M.A."/>
            <person name="Achtman M."/>
            <person name="Atkin R."/>
            <person name="Baker S."/>
            <person name="Basham D."/>
            <person name="Bason N."/>
            <person name="Cherevach I."/>
            <person name="Chillingworth T."/>
            <person name="Collins M."/>
            <person name="Cronin A."/>
            <person name="Davis P."/>
            <person name="Doggett J."/>
            <person name="Feltwell T."/>
            <person name="Goble A."/>
            <person name="Hamlin N."/>
            <person name="Hauser H."/>
            <person name="Holroyd S."/>
            <person name="Jagels K."/>
            <person name="Leather S."/>
            <person name="Moule S."/>
            <person name="Norberczak H."/>
            <person name="O'Neil S."/>
            <person name="Ormond D."/>
            <person name="Price C."/>
            <person name="Rabbinowitsch E."/>
            <person name="Rutter S."/>
            <person name="Sanders M."/>
            <person name="Saunders D."/>
            <person name="Seeger K."/>
            <person name="Sharp S."/>
            <person name="Simmonds M."/>
            <person name="Skelton J."/>
            <person name="Squares R."/>
            <person name="Squares S."/>
            <person name="Stevens K."/>
            <person name="Unwin L."/>
            <person name="Whitehead S."/>
            <person name="Barrell B.G."/>
            <person name="Maskell D.J."/>
        </authorList>
    </citation>
    <scope>NUCLEOTIDE SEQUENCE [LARGE SCALE GENOMIC DNA]</scope>
    <source>
        <strain>ATCC BAA-588 / NCTC 13252 / RB50</strain>
    </source>
</reference>
<gene>
    <name evidence="1" type="primary">aceK</name>
    <name type="ordered locus">BB4946</name>
</gene>
<keyword id="KW-0067">ATP-binding</keyword>
<keyword id="KW-0963">Cytoplasm</keyword>
<keyword id="KW-0329">Glyoxylate bypass</keyword>
<keyword id="KW-0378">Hydrolase</keyword>
<keyword id="KW-0418">Kinase</keyword>
<keyword id="KW-0547">Nucleotide-binding</keyword>
<keyword id="KW-0904">Protein phosphatase</keyword>
<keyword id="KW-0723">Serine/threonine-protein kinase</keyword>
<keyword id="KW-0808">Transferase</keyword>
<keyword id="KW-0816">Tricarboxylic acid cycle</keyword>
<accession>Q7WDP2</accession>
<name>ACEK_BORBR</name>
<dbReference type="EC" id="2.7.11.5" evidence="1"/>
<dbReference type="EC" id="3.1.3.-" evidence="1"/>
<dbReference type="EMBL" id="BX640452">
    <property type="protein sequence ID" value="CAE35310.1"/>
    <property type="molecule type" value="Genomic_DNA"/>
</dbReference>
<dbReference type="RefSeq" id="WP_003815951.1">
    <property type="nucleotide sequence ID" value="NC_002927.3"/>
</dbReference>
<dbReference type="SMR" id="Q7WDP2"/>
<dbReference type="GeneID" id="56476553"/>
<dbReference type="KEGG" id="bbr:BB4946"/>
<dbReference type="eggNOG" id="COG4579">
    <property type="taxonomic scope" value="Bacteria"/>
</dbReference>
<dbReference type="HOGENOM" id="CLU_033804_1_1_4"/>
<dbReference type="Proteomes" id="UP000001027">
    <property type="component" value="Chromosome"/>
</dbReference>
<dbReference type="GO" id="GO:0005737">
    <property type="term" value="C:cytoplasm"/>
    <property type="evidence" value="ECO:0007669"/>
    <property type="project" value="UniProtKB-SubCell"/>
</dbReference>
<dbReference type="GO" id="GO:0008772">
    <property type="term" value="F:[isocitrate dehydrogenase (NADP+)] kinase activity"/>
    <property type="evidence" value="ECO:0007669"/>
    <property type="project" value="UniProtKB-UniRule"/>
</dbReference>
<dbReference type="GO" id="GO:0016208">
    <property type="term" value="F:AMP binding"/>
    <property type="evidence" value="ECO:0007669"/>
    <property type="project" value="TreeGrafter"/>
</dbReference>
<dbReference type="GO" id="GO:0005524">
    <property type="term" value="F:ATP binding"/>
    <property type="evidence" value="ECO:0007669"/>
    <property type="project" value="UniProtKB-UniRule"/>
</dbReference>
<dbReference type="GO" id="GO:0004721">
    <property type="term" value="F:phosphoprotein phosphatase activity"/>
    <property type="evidence" value="ECO:0007669"/>
    <property type="project" value="UniProtKB-KW"/>
</dbReference>
<dbReference type="GO" id="GO:0004674">
    <property type="term" value="F:protein serine/threonine kinase activity"/>
    <property type="evidence" value="ECO:0007669"/>
    <property type="project" value="UniProtKB-KW"/>
</dbReference>
<dbReference type="GO" id="GO:0006006">
    <property type="term" value="P:glucose metabolic process"/>
    <property type="evidence" value="ECO:0007669"/>
    <property type="project" value="InterPro"/>
</dbReference>
<dbReference type="GO" id="GO:0006097">
    <property type="term" value="P:glyoxylate cycle"/>
    <property type="evidence" value="ECO:0007669"/>
    <property type="project" value="UniProtKB-UniRule"/>
</dbReference>
<dbReference type="GO" id="GO:0006099">
    <property type="term" value="P:tricarboxylic acid cycle"/>
    <property type="evidence" value="ECO:0007669"/>
    <property type="project" value="UniProtKB-UniRule"/>
</dbReference>
<dbReference type="HAMAP" id="MF_00747">
    <property type="entry name" value="AceK"/>
    <property type="match status" value="1"/>
</dbReference>
<dbReference type="InterPro" id="IPR046855">
    <property type="entry name" value="AceK_kinase"/>
</dbReference>
<dbReference type="InterPro" id="IPR046854">
    <property type="entry name" value="AceK_regulatory"/>
</dbReference>
<dbReference type="InterPro" id="IPR010452">
    <property type="entry name" value="Isocitrate_DH_AceK"/>
</dbReference>
<dbReference type="NCBIfam" id="NF002804">
    <property type="entry name" value="PRK02946.1"/>
    <property type="match status" value="1"/>
</dbReference>
<dbReference type="PANTHER" id="PTHR39559">
    <property type="match status" value="1"/>
</dbReference>
<dbReference type="PANTHER" id="PTHR39559:SF1">
    <property type="entry name" value="ISOCITRATE DEHYDROGENASE KINASE_PHOSPHATASE"/>
    <property type="match status" value="1"/>
</dbReference>
<dbReference type="Pfam" id="PF06315">
    <property type="entry name" value="AceK_kinase"/>
    <property type="match status" value="1"/>
</dbReference>
<dbReference type="Pfam" id="PF20423">
    <property type="entry name" value="AceK_regulatory"/>
    <property type="match status" value="1"/>
</dbReference>
<dbReference type="PIRSF" id="PIRSF000719">
    <property type="entry name" value="AceK"/>
    <property type="match status" value="1"/>
</dbReference>
<evidence type="ECO:0000255" key="1">
    <source>
        <dbReference type="HAMAP-Rule" id="MF_00747"/>
    </source>
</evidence>
<feature type="chain" id="PRO_0000057894" description="Isocitrate dehydrogenase kinase/phosphatase">
    <location>
        <begin position="1"/>
        <end position="619"/>
    </location>
</feature>
<feature type="active site" evidence="1">
    <location>
        <position position="409"/>
    </location>
</feature>
<feature type="binding site" evidence="1">
    <location>
        <begin position="354"/>
        <end position="360"/>
    </location>
    <ligand>
        <name>ATP</name>
        <dbReference type="ChEBI" id="CHEBI:30616"/>
    </ligand>
</feature>
<feature type="binding site" evidence="1">
    <location>
        <position position="375"/>
    </location>
    <ligand>
        <name>ATP</name>
        <dbReference type="ChEBI" id="CHEBI:30616"/>
    </ligand>
</feature>
<sequence>MIYSGDVQRIEPAPVAGPAPLDVAHLILAGFDRHYALFRYSAQRAKSLFESGDWHGMQRLSRERIEYYDMRVRECATQLDSALRGSDARTADGSRANGSAALSEAQTAFWQAVKQEFVGLLADHRQPECAETFFNSVSCRILHRDYFHNDFLFVRPAIATDYLDSRIPSYRVYYPVAEGLHKSLIRMVADFGLAVPYADLPRDARLLARAAVRQLRGQLPRHAGPRLASDCQIQVLGSLFFRNTGAYIVGRLINQGTVYPFAVALRRNPAGQVCLDALLLGADDLSTLFSFTRAYFLVDMETPAAVVNFLASLLPRKPKAELYTMLGLQKQGKTLFYRDFLHHLTHSRDAFDIAPGIRGMVMCVFTLPSYPYVFKLIKDRIDKDGMDHATVRRKYQMVKLHDRVGRMADTWEYSQVALPRSRFAPRLLEELRRLVPSLIEENGDTVVIRHVYIERRMMPLNLYLRHASDPLLEVAVREYGDAIRQLATANIFPGDMLYKNFGVTRLGRVVFYDYDEIQRMTEMNFRAIPPAPNEEAELSSEPWYAVGPNDVFPEEFGRFLLGDPRVRQAFLRHHADLLAPQWWQACRARVAQGRIEEFFPYDTDRRLHPQAAPPPRTAA</sequence>
<organism>
    <name type="scientific">Bordetella bronchiseptica (strain ATCC BAA-588 / NCTC 13252 / RB50)</name>
    <name type="common">Alcaligenes bronchisepticus</name>
    <dbReference type="NCBI Taxonomy" id="257310"/>
    <lineage>
        <taxon>Bacteria</taxon>
        <taxon>Pseudomonadati</taxon>
        <taxon>Pseudomonadota</taxon>
        <taxon>Betaproteobacteria</taxon>
        <taxon>Burkholderiales</taxon>
        <taxon>Alcaligenaceae</taxon>
        <taxon>Bordetella</taxon>
    </lineage>
</organism>
<comment type="function">
    <text evidence="1">Bifunctional enzyme which can phosphorylate or dephosphorylate isocitrate dehydrogenase (IDH) on a specific serine residue. This is a regulatory mechanism which enables bacteria to bypass the Krebs cycle via the glyoxylate shunt in response to the source of carbon. When bacteria are grown on glucose, IDH is fully active and unphosphorylated, but when grown on acetate or ethanol, the activity of IDH declines drastically concomitant with its phosphorylation.</text>
</comment>
<comment type="catalytic activity">
    <reaction evidence="1">
        <text>L-seryl-[isocitrate dehydrogenase] + ATP = O-phospho-L-seryl-[isocitrate dehydrogenase] + ADP + H(+)</text>
        <dbReference type="Rhea" id="RHEA:43540"/>
        <dbReference type="Rhea" id="RHEA-COMP:10605"/>
        <dbReference type="Rhea" id="RHEA-COMP:10606"/>
        <dbReference type="ChEBI" id="CHEBI:15378"/>
        <dbReference type="ChEBI" id="CHEBI:29999"/>
        <dbReference type="ChEBI" id="CHEBI:30616"/>
        <dbReference type="ChEBI" id="CHEBI:83421"/>
        <dbReference type="ChEBI" id="CHEBI:456216"/>
        <dbReference type="EC" id="2.7.11.5"/>
    </reaction>
</comment>
<comment type="subcellular location">
    <subcellularLocation>
        <location evidence="1">Cytoplasm</location>
    </subcellularLocation>
</comment>
<comment type="similarity">
    <text evidence="1">Belongs to the AceK family.</text>
</comment>